<proteinExistence type="evidence at transcript level"/>
<protein>
    <recommendedName>
        <fullName>Protein phosphatase 1G</fullName>
        <ecNumber evidence="3">3.1.3.16</ecNumber>
    </recommendedName>
    <alternativeName>
        <fullName>Magnesium-dependent calcium inhibitable phosphatase</fullName>
        <shortName>MCPP</shortName>
    </alternativeName>
    <alternativeName>
        <fullName>Protein phosphatase 1B</fullName>
    </alternativeName>
    <alternativeName>
        <fullName>Protein phosphatase 2C isoform gamma</fullName>
        <shortName>PP2C-gamma</shortName>
    </alternativeName>
    <alternativeName>
        <fullName>Protein phosphatase magnesium-dependent 1 gamma</fullName>
    </alternativeName>
</protein>
<comment type="catalytic activity">
    <reaction evidence="5">
        <text>O-phospho-L-seryl-[protein] + H2O = L-seryl-[protein] + phosphate</text>
        <dbReference type="Rhea" id="RHEA:20629"/>
        <dbReference type="Rhea" id="RHEA-COMP:9863"/>
        <dbReference type="Rhea" id="RHEA-COMP:11604"/>
        <dbReference type="ChEBI" id="CHEBI:15377"/>
        <dbReference type="ChEBI" id="CHEBI:29999"/>
        <dbReference type="ChEBI" id="CHEBI:43474"/>
        <dbReference type="ChEBI" id="CHEBI:83421"/>
        <dbReference type="EC" id="3.1.3.16"/>
    </reaction>
    <physiologicalReaction direction="left-to-right" evidence="7">
        <dbReference type="Rhea" id="RHEA:20630"/>
    </physiologicalReaction>
</comment>
<comment type="catalytic activity">
    <reaction evidence="4">
        <text>O-phospho-L-threonyl-[protein] + H2O = L-threonyl-[protein] + phosphate</text>
        <dbReference type="Rhea" id="RHEA:47004"/>
        <dbReference type="Rhea" id="RHEA-COMP:11060"/>
        <dbReference type="Rhea" id="RHEA-COMP:11605"/>
        <dbReference type="ChEBI" id="CHEBI:15377"/>
        <dbReference type="ChEBI" id="CHEBI:30013"/>
        <dbReference type="ChEBI" id="CHEBI:43474"/>
        <dbReference type="ChEBI" id="CHEBI:61977"/>
        <dbReference type="EC" id="3.1.3.16"/>
    </reaction>
    <physiologicalReaction direction="left-to-right" evidence="4">
        <dbReference type="Rhea" id="RHEA:47005"/>
    </physiologicalReaction>
</comment>
<comment type="cofactor">
    <cofactor evidence="3">
        <name>Mg(2+)</name>
        <dbReference type="ChEBI" id="CHEBI:18420"/>
    </cofactor>
    <cofactor evidence="3">
        <name>Mn(2+)</name>
        <dbReference type="ChEBI" id="CHEBI:29035"/>
    </cofactor>
    <text evidence="5">Binds 2 magnesium or manganese ions per subunit.</text>
</comment>
<comment type="subunit">
    <text evidence="1">Interacts with NOL3; may dephosphorylate NOL3.</text>
</comment>
<comment type="subcellular location">
    <subcellularLocation>
        <location evidence="7">Cytoplasm</location>
    </subcellularLocation>
    <subcellularLocation>
        <location evidence="2">Membrane</location>
        <topology evidence="2">Lipid-anchor</topology>
    </subcellularLocation>
</comment>
<comment type="similarity">
    <text evidence="7">Belongs to the PP2C family.</text>
</comment>
<name>PPM1G_BOVIN</name>
<accession>P79126</accession>
<accession>Q3ZBB4</accession>
<evidence type="ECO:0000250" key="1">
    <source>
        <dbReference type="UniProtKB" id="F1LNI5"/>
    </source>
</evidence>
<evidence type="ECO:0000250" key="2">
    <source>
        <dbReference type="UniProtKB" id="O15355"/>
    </source>
</evidence>
<evidence type="ECO:0000250" key="3">
    <source>
        <dbReference type="UniProtKB" id="P35813"/>
    </source>
</evidence>
<evidence type="ECO:0000250" key="4">
    <source>
        <dbReference type="UniProtKB" id="P39966"/>
    </source>
</evidence>
<evidence type="ECO:0000255" key="5">
    <source>
        <dbReference type="PROSITE-ProRule" id="PRU01082"/>
    </source>
</evidence>
<evidence type="ECO:0000256" key="6">
    <source>
        <dbReference type="SAM" id="MobiDB-lite"/>
    </source>
</evidence>
<evidence type="ECO:0000305" key="7"/>
<organism>
    <name type="scientific">Bos taurus</name>
    <name type="common">Bovine</name>
    <dbReference type="NCBI Taxonomy" id="9913"/>
    <lineage>
        <taxon>Eukaryota</taxon>
        <taxon>Metazoa</taxon>
        <taxon>Chordata</taxon>
        <taxon>Craniata</taxon>
        <taxon>Vertebrata</taxon>
        <taxon>Euteleostomi</taxon>
        <taxon>Mammalia</taxon>
        <taxon>Eutheria</taxon>
        <taxon>Laurasiatheria</taxon>
        <taxon>Artiodactyla</taxon>
        <taxon>Ruminantia</taxon>
        <taxon>Pecora</taxon>
        <taxon>Bovidae</taxon>
        <taxon>Bovinae</taxon>
        <taxon>Bos</taxon>
    </lineage>
</organism>
<keyword id="KW-0007">Acetylation</keyword>
<keyword id="KW-0963">Cytoplasm</keyword>
<keyword id="KW-0378">Hydrolase</keyword>
<keyword id="KW-0449">Lipoprotein</keyword>
<keyword id="KW-0460">Magnesium</keyword>
<keyword id="KW-0464">Manganese</keyword>
<keyword id="KW-0472">Membrane</keyword>
<keyword id="KW-0479">Metal-binding</keyword>
<keyword id="KW-0488">Methylation</keyword>
<keyword id="KW-0519">Myristate</keyword>
<keyword id="KW-0597">Phosphoprotein</keyword>
<keyword id="KW-0904">Protein phosphatase</keyword>
<keyword id="KW-1185">Reference proteome</keyword>
<keyword id="KW-0677">Repeat</keyword>
<reference key="1">
    <citation type="submission" date="1996-12" db="EMBL/GenBank/DDBJ databases">
        <title>Characteristics of a Mg-dependent, calcium-inhibitable serine/threonine protein phosphatase revealed by its cDNA.</title>
        <authorList>
            <person name="Huang C.Y."/>
            <person name="Qin K."/>
        </authorList>
    </citation>
    <scope>NUCLEOTIDE SEQUENCE [MRNA]</scope>
</reference>
<reference key="2">
    <citation type="submission" date="2005-08" db="EMBL/GenBank/DDBJ databases">
        <authorList>
            <consortium name="NIH - Mammalian Gene Collection (MGC) project"/>
        </authorList>
    </citation>
    <scope>NUCLEOTIDE SEQUENCE [LARGE SCALE MRNA]</scope>
    <source>
        <strain>Hereford</strain>
        <tissue>Thymus</tissue>
    </source>
</reference>
<sequence length="543" mass="58607">MGAYLSQPNTVKCSGDGVGASRLPLPYGFSAMQGWRVSMEDAHNCIPELDSETAMFSVYDGHGGEEVALYCAKYLPDIIKDQKAYKEGKLQKALEDAFLAIDAKLTTEEVIKELAQIAGRPTEDEDEKEKVADEDDVDNEEAALLHEEATMTIEELLTRYGQNCHKGAPHSKSGAGTGEEPGSQGLNGEAGPEDPSRETSAEENGPTAKAHTGLSSNSECGTEAGQGGEPGTPTGEAGPSCSSASDKLPRVAKSKFFEDSEDESDEAEEEEEDSEECSEEEDGYSSEEAENEEDEDDTEEAEEDDEEEEMMVPGMEGKEEPGSDSGTTAVVALIRGKQLIVANAGDSRCVVSEAGKALDMSYDHKPEDEVELARIKNAGGKVTMDGRVNGGLNLSRAIGDHFYKRNKNLPPEEQMISALPDIKVLTLTDDHEFMVIACDGIWNVMSSQEVIDFIQSKISQRDENGELRLLSSIVEELLDQCLAPDTSGDGTGCDNMTCIIICFKPRNTAAPQPESGKRKLEEVLSTEGAEENGNSDKKKAKRD</sequence>
<feature type="initiator methionine" description="Removed" evidence="2">
    <location>
        <position position="1"/>
    </location>
</feature>
<feature type="chain" id="PRO_0000057749" description="Protein phosphatase 1G">
    <location>
        <begin position="2"/>
        <end position="543"/>
    </location>
</feature>
<feature type="domain" description="PPM-type phosphatase" evidence="5">
    <location>
        <begin position="26"/>
        <end position="503"/>
    </location>
</feature>
<feature type="region of interest" description="Disordered" evidence="6">
    <location>
        <begin position="116"/>
        <end position="139"/>
    </location>
</feature>
<feature type="region of interest" description="Disordered" evidence="6">
    <location>
        <begin position="163"/>
        <end position="326"/>
    </location>
</feature>
<feature type="region of interest" description="Disordered" evidence="6">
    <location>
        <begin position="508"/>
        <end position="543"/>
    </location>
</feature>
<feature type="compositionally biased region" description="Acidic residues" evidence="6">
    <location>
        <begin position="123"/>
        <end position="139"/>
    </location>
</feature>
<feature type="compositionally biased region" description="Acidic residues" evidence="6">
    <location>
        <begin position="259"/>
        <end position="310"/>
    </location>
</feature>
<feature type="binding site" evidence="3">
    <location>
        <position position="60"/>
    </location>
    <ligand>
        <name>Mn(2+)</name>
        <dbReference type="ChEBI" id="CHEBI:29035"/>
        <label>1</label>
    </ligand>
</feature>
<feature type="binding site" evidence="3">
    <location>
        <position position="60"/>
    </location>
    <ligand>
        <name>Mn(2+)</name>
        <dbReference type="ChEBI" id="CHEBI:29035"/>
        <label>2</label>
    </ligand>
</feature>
<feature type="binding site" evidence="3">
    <location>
        <position position="61"/>
    </location>
    <ligand>
        <name>Mn(2+)</name>
        <dbReference type="ChEBI" id="CHEBI:29035"/>
        <label>1</label>
    </ligand>
</feature>
<feature type="binding site" evidence="3">
    <location>
        <position position="439"/>
    </location>
    <ligand>
        <name>Mn(2+)</name>
        <dbReference type="ChEBI" id="CHEBI:29035"/>
        <label>2</label>
    </ligand>
</feature>
<feature type="binding site" evidence="3">
    <location>
        <position position="494"/>
    </location>
    <ligand>
        <name>Mn(2+)</name>
        <dbReference type="ChEBI" id="CHEBI:29035"/>
        <label>2</label>
    </ligand>
</feature>
<feature type="modified residue" description="Omega-N-methylarginine" evidence="2">
    <location>
        <position position="22"/>
    </location>
</feature>
<feature type="modified residue" description="Phosphothreonine" evidence="2">
    <location>
        <position position="122"/>
    </location>
</feature>
<feature type="modified residue" description="Phosphoserine" evidence="2">
    <location>
        <position position="183"/>
    </location>
</feature>
<feature type="modified residue" description="N6-acetyllysine" evidence="2">
    <location>
        <position position="381"/>
    </location>
</feature>
<feature type="modified residue" description="Phosphoserine" evidence="2">
    <location>
        <position position="525"/>
    </location>
</feature>
<feature type="lipid moiety-binding region" description="N-myristoyl glycine" evidence="2">
    <location>
        <position position="2"/>
    </location>
</feature>
<feature type="sequence conflict" description="In Ref. 1; AAB39357." evidence="7" ref="1">
    <original>P</original>
    <variation>Q</variation>
    <location>
        <position position="47"/>
    </location>
</feature>
<feature type="sequence conflict" description="In Ref. 1; AAB39357." evidence="7" ref="1">
    <original>E</original>
    <variation>V</variation>
    <location>
        <position position="203"/>
    </location>
</feature>
<feature type="sequence conflict" description="In Ref. 1; AAB39357." evidence="7" ref="1">
    <original>A</original>
    <variation>D</variation>
    <location>
        <position position="252"/>
    </location>
</feature>
<feature type="sequence conflict" description="In Ref. 1; AAB39357." evidence="7" ref="1">
    <original>E</original>
    <variation>Y</variation>
    <location>
        <position position="476"/>
    </location>
</feature>
<feature type="sequence conflict" description="In Ref. 1; AAB39357." evidence="7" ref="1">
    <original>E</original>
    <variation>Q</variation>
    <location>
        <position position="531"/>
    </location>
</feature>
<feature type="sequence conflict" description="In Ref. 1; AAB39357." evidence="7" ref="1">
    <original>N</original>
    <variation>H</variation>
    <location>
        <position position="534"/>
    </location>
</feature>
<dbReference type="EC" id="3.1.3.16" evidence="3"/>
<dbReference type="EMBL" id="U81159">
    <property type="protein sequence ID" value="AAB39357.1"/>
    <property type="molecule type" value="mRNA"/>
</dbReference>
<dbReference type="EMBL" id="BC103458">
    <property type="protein sequence ID" value="AAI03459.1"/>
    <property type="molecule type" value="mRNA"/>
</dbReference>
<dbReference type="RefSeq" id="NP_777226.2">
    <property type="nucleotide sequence ID" value="NM_174801.4"/>
</dbReference>
<dbReference type="SMR" id="P79126"/>
<dbReference type="FunCoup" id="P79126">
    <property type="interactions" value="4769"/>
</dbReference>
<dbReference type="STRING" id="9913.ENSBTAP00000026003"/>
<dbReference type="PaxDb" id="9913-ENSBTAP00000026003"/>
<dbReference type="Ensembl" id="ENSBTAT00000026003.5">
    <property type="protein sequence ID" value="ENSBTAP00000026003.3"/>
    <property type="gene ID" value="ENSBTAG00000019522.5"/>
</dbReference>
<dbReference type="GeneID" id="286880"/>
<dbReference type="KEGG" id="bta:286880"/>
<dbReference type="CTD" id="5496"/>
<dbReference type="VEuPathDB" id="HostDB:ENSBTAG00000019522"/>
<dbReference type="VGNC" id="VGNC:33213">
    <property type="gene designation" value="PPM1G"/>
</dbReference>
<dbReference type="eggNOG" id="KOG0699">
    <property type="taxonomic scope" value="Eukaryota"/>
</dbReference>
<dbReference type="GeneTree" id="ENSGT00940000158427"/>
<dbReference type="HOGENOM" id="CLU_013173_13_1_1"/>
<dbReference type="InParanoid" id="P79126"/>
<dbReference type="OMA" id="YCAMKLP"/>
<dbReference type="OrthoDB" id="10264738at2759"/>
<dbReference type="TreeFam" id="TF354280"/>
<dbReference type="Proteomes" id="UP000009136">
    <property type="component" value="Chromosome 11"/>
</dbReference>
<dbReference type="Bgee" id="ENSBTAG00000019522">
    <property type="expression patterns" value="Expressed in spermatid and 107 other cell types or tissues"/>
</dbReference>
<dbReference type="GO" id="GO:0005737">
    <property type="term" value="C:cytoplasm"/>
    <property type="evidence" value="ECO:0007669"/>
    <property type="project" value="UniProtKB-SubCell"/>
</dbReference>
<dbReference type="GO" id="GO:0016020">
    <property type="term" value="C:membrane"/>
    <property type="evidence" value="ECO:0007669"/>
    <property type="project" value="UniProtKB-SubCell"/>
</dbReference>
<dbReference type="GO" id="GO:0005654">
    <property type="term" value="C:nucleoplasm"/>
    <property type="evidence" value="ECO:0000318"/>
    <property type="project" value="GO_Central"/>
</dbReference>
<dbReference type="GO" id="GO:0046872">
    <property type="term" value="F:metal ion binding"/>
    <property type="evidence" value="ECO:0007669"/>
    <property type="project" value="UniProtKB-KW"/>
</dbReference>
<dbReference type="GO" id="GO:0004722">
    <property type="term" value="F:protein serine/threonine phosphatase activity"/>
    <property type="evidence" value="ECO:0007669"/>
    <property type="project" value="UniProtKB-EC"/>
</dbReference>
<dbReference type="GO" id="GO:0051726">
    <property type="term" value="P:regulation of cell cycle"/>
    <property type="evidence" value="ECO:0007669"/>
    <property type="project" value="Ensembl"/>
</dbReference>
<dbReference type="GO" id="GO:0007165">
    <property type="term" value="P:signal transduction"/>
    <property type="evidence" value="ECO:0000318"/>
    <property type="project" value="GO_Central"/>
</dbReference>
<dbReference type="CDD" id="cd00143">
    <property type="entry name" value="PP2Cc"/>
    <property type="match status" value="2"/>
</dbReference>
<dbReference type="FunFam" id="3.60.40.10:FF:000023">
    <property type="entry name" value="Protein phosphatase, Mg2+/Mn2+-dependent, 1G"/>
    <property type="match status" value="1"/>
</dbReference>
<dbReference type="FunFam" id="3.60.40.10:FF:000029">
    <property type="entry name" value="Protein phosphatase, Mg2+/Mn2+-dependent, 1G"/>
    <property type="match status" value="1"/>
</dbReference>
<dbReference type="Gene3D" id="3.60.40.10">
    <property type="entry name" value="PPM-type phosphatase domain"/>
    <property type="match status" value="2"/>
</dbReference>
<dbReference type="InterPro" id="IPR015655">
    <property type="entry name" value="PP2C"/>
</dbReference>
<dbReference type="InterPro" id="IPR000222">
    <property type="entry name" value="PP2C_BS"/>
</dbReference>
<dbReference type="InterPro" id="IPR036457">
    <property type="entry name" value="PPM-type-like_dom_sf"/>
</dbReference>
<dbReference type="InterPro" id="IPR001932">
    <property type="entry name" value="PPM-type_phosphatase-like_dom"/>
</dbReference>
<dbReference type="PANTHER" id="PTHR13832:SF803">
    <property type="entry name" value="PROTEIN PHOSPHATASE 1G"/>
    <property type="match status" value="1"/>
</dbReference>
<dbReference type="PANTHER" id="PTHR13832">
    <property type="entry name" value="PROTEIN PHOSPHATASE 2C"/>
    <property type="match status" value="1"/>
</dbReference>
<dbReference type="Pfam" id="PF00481">
    <property type="entry name" value="PP2C"/>
    <property type="match status" value="2"/>
</dbReference>
<dbReference type="SMART" id="SM00332">
    <property type="entry name" value="PP2Cc"/>
    <property type="match status" value="1"/>
</dbReference>
<dbReference type="SUPFAM" id="SSF81606">
    <property type="entry name" value="PP2C-like"/>
    <property type="match status" value="1"/>
</dbReference>
<dbReference type="PROSITE" id="PS01032">
    <property type="entry name" value="PPM_1"/>
    <property type="match status" value="1"/>
</dbReference>
<dbReference type="PROSITE" id="PS51746">
    <property type="entry name" value="PPM_2"/>
    <property type="match status" value="1"/>
</dbReference>
<gene>
    <name type="primary">PPM1G</name>
    <name type="synonym">PPM1C</name>
</gene>